<name>MIP_LEGPN</name>
<proteinExistence type="evidence at protein level"/>
<comment type="function">
    <text>Essential virulence factor associated with macrophage infectivity. Exhibits PPIase activity.</text>
</comment>
<comment type="catalytic activity">
    <reaction>
        <text>[protein]-peptidylproline (omega=180) = [protein]-peptidylproline (omega=0)</text>
        <dbReference type="Rhea" id="RHEA:16237"/>
        <dbReference type="Rhea" id="RHEA-COMP:10747"/>
        <dbReference type="Rhea" id="RHEA-COMP:10748"/>
        <dbReference type="ChEBI" id="CHEBI:83833"/>
        <dbReference type="ChEBI" id="CHEBI:83834"/>
        <dbReference type="EC" id="5.2.1.8"/>
    </reaction>
</comment>
<comment type="subcellular location">
    <subcellularLocation>
        <location>Cell outer membrane</location>
    </subcellularLocation>
</comment>
<comment type="similarity">
    <text evidence="3">Belongs to the FKBP-type PPIase family.</text>
</comment>
<evidence type="ECO:0000255" key="1">
    <source>
        <dbReference type="PROSITE-ProRule" id="PRU00277"/>
    </source>
</evidence>
<evidence type="ECO:0000269" key="2">
    <source>
    </source>
</evidence>
<evidence type="ECO:0000305" key="3"/>
<sequence>MKMKLVTAAVMGLAMSTAMAATDATSLATDKDKLSYSIGADLGKNFKNQGIDVNPEAMAKGMQDAMSGAQLALTEQQMKDVLNKFQKDLMAKRTAEFNKKADENKVKGEAFLTENKNKPGVVVLPSGLQYKVINAGNGVKPGKSDTVTVEYTGRLIDGTVFDSTEKTGKPATFQVSQVIPGWTEALQLMPAGSTWEIYVPSGLAYGPRSVGGPIGPNETLIFKIHLISVKKSS</sequence>
<reference key="1">
    <citation type="journal article" date="1989" name="Infect. Immun.">
        <title>DNA sequence of mip, a Legionella pneumophila gene associated with macrophage infectivity.</title>
        <authorList>
            <person name="Engleberg N.C."/>
            <person name="Carter C."/>
            <person name="Weber D.R."/>
            <person name="Cianciotto N.P."/>
            <person name="Eisenstein B.I."/>
        </authorList>
    </citation>
    <scope>NUCLEOTIDE SEQUENCE [GENOMIC DNA]</scope>
    <scope>PROTEIN SEQUENCE OF 21-30</scope>
    <source>
        <strain>130b / Wadsworth / Serogroup 1</strain>
    </source>
</reference>
<reference key="2">
    <citation type="journal article" date="2002" name="Curr. Microbiol.">
        <title>Sequence polymorphism of dotA and mip alleles mediating invasion and intracellular replication of Legionella pneumophila.</title>
        <authorList>
            <person name="Bumbaugh A.C."/>
            <person name="McGraw E.A."/>
            <person name="Page K.L."/>
            <person name="Selander R.K."/>
            <person name="Whittam T.S."/>
        </authorList>
    </citation>
    <scope>NUCLEOTIDE SEQUENCE [GENOMIC DNA]</scope>
    <source>
        <strain>ATCC 33154 / Togus 1 / Serogroup 2</strain>
        <strain>ATCC 33155 / Bloomington 2 / Serogroup 3</strain>
        <strain>ATCC 33215 / Chicago 2 / Serogroup 6</strain>
        <strain>ATCC 43283 / Leiden 1 / Serogroup 10</strain>
        <strain>ATCC 43290 / Serogroup 12</strain>
        <strain>Edelstein F1480 / Serogroup 9</strain>
        <strain>Yu 1242 / Serogroup 6</strain>
    </source>
</reference>
<reference key="3">
    <citation type="submission" date="2002-07" db="EMBL/GenBank/DDBJ databases">
        <title>Genotypic characterization of Legionella species isolated in Italy.</title>
        <authorList>
            <person name="Castellani Pastoris M."/>
            <person name="Scaturro M."/>
            <person name="La Rosa G."/>
            <person name="Muscillo M."/>
            <person name="Ricci M.L."/>
        </authorList>
    </citation>
    <scope>NUCLEOTIDE SEQUENCE [GENOMIC DNA]</scope>
    <source>
        <strain>Chicago / Serogroup 6</strain>
        <strain>Pavia 37 / Serogroup 6</strain>
        <strain>Trento 36 / Serogroup 6</strain>
    </source>
</reference>
<reference key="4">
    <citation type="submission" date="2002-07" db="EMBL/GenBank/DDBJ databases">
        <title>Genetic characterization of an avirulent mutant of Legionella pneumophila serogroup 6.</title>
        <authorList>
            <person name="Castellani Pastoris M."/>
            <person name="Scaturro M."/>
            <person name="La Rosa G."/>
            <person name="Muscillo M."/>
            <person name="Ricci M.L."/>
        </authorList>
    </citation>
    <scope>NUCLEOTIDE SEQUENCE [GENOMIC DNA]</scope>
    <source>
        <strain>Serogroup 6</strain>
    </source>
</reference>
<organism>
    <name type="scientific">Legionella pneumophila</name>
    <dbReference type="NCBI Taxonomy" id="446"/>
    <lineage>
        <taxon>Bacteria</taxon>
        <taxon>Pseudomonadati</taxon>
        <taxon>Pseudomonadota</taxon>
        <taxon>Gammaproteobacteria</taxon>
        <taxon>Legionellales</taxon>
        <taxon>Legionellaceae</taxon>
        <taxon>Legionella</taxon>
    </lineage>
</organism>
<feature type="signal peptide" evidence="2">
    <location>
        <begin position="1"/>
        <end position="20"/>
    </location>
</feature>
<feature type="chain" id="PRO_0000025532" description="Outer membrane protein MIP">
    <location>
        <begin position="21"/>
        <end position="233"/>
    </location>
</feature>
<feature type="domain" description="PPIase FKBP-type" evidence="1">
    <location>
        <begin position="144"/>
        <end position="233"/>
    </location>
</feature>
<protein>
    <recommendedName>
        <fullName>Outer membrane protein MIP</fullName>
        <ecNumber>5.2.1.8</ecNumber>
    </recommendedName>
    <alternativeName>
        <fullName>Macrophage infectivity potentiator</fullName>
    </alternativeName>
    <alternativeName>
        <fullName>Peptidyl-prolyl cis-trans isomerase</fullName>
        <shortName>PPIase</shortName>
    </alternativeName>
    <alternativeName>
        <fullName>Rotamase</fullName>
    </alternativeName>
</protein>
<dbReference type="EC" id="5.2.1.8"/>
<dbReference type="EMBL" id="AF095221">
    <property type="protein sequence ID" value="AAF32500.1"/>
    <property type="molecule type" value="Genomic_DNA"/>
</dbReference>
<dbReference type="EMBL" id="AF095222">
    <property type="protein sequence ID" value="AAF32501.1"/>
    <property type="molecule type" value="Genomic_DNA"/>
</dbReference>
<dbReference type="EMBL" id="AF095223">
    <property type="protein sequence ID" value="AAF32502.1"/>
    <property type="molecule type" value="Genomic_DNA"/>
</dbReference>
<dbReference type="EMBL" id="AF095225">
    <property type="protein sequence ID" value="AAF32504.1"/>
    <property type="molecule type" value="Genomic_DNA"/>
</dbReference>
<dbReference type="EMBL" id="AF095226">
    <property type="protein sequence ID" value="AAF32505.1"/>
    <property type="molecule type" value="Genomic_DNA"/>
</dbReference>
<dbReference type="EMBL" id="AF095227">
    <property type="protein sequence ID" value="AAF32506.1"/>
    <property type="molecule type" value="Genomic_DNA"/>
</dbReference>
<dbReference type="EMBL" id="AF095228">
    <property type="protein sequence ID" value="AAF32507.1"/>
    <property type="molecule type" value="Genomic_DNA"/>
</dbReference>
<dbReference type="EMBL" id="AJ496266">
    <property type="protein sequence ID" value="CAD42884.1"/>
    <property type="molecule type" value="Genomic_DNA"/>
</dbReference>
<dbReference type="EMBL" id="AJ496270">
    <property type="protein sequence ID" value="CAD42888.1"/>
    <property type="molecule type" value="Genomic_DNA"/>
</dbReference>
<dbReference type="EMBL" id="AJ496271">
    <property type="protein sequence ID" value="CAD42889.1"/>
    <property type="molecule type" value="Genomic_DNA"/>
</dbReference>
<dbReference type="EMBL" id="AJ496381">
    <property type="protein sequence ID" value="CAD43142.1"/>
    <property type="molecule type" value="Genomic_DNA"/>
</dbReference>
<dbReference type="RefSeq" id="WP_011214989.1">
    <property type="nucleotide sequence ID" value="NZ_UGOS01000001.1"/>
</dbReference>
<dbReference type="PDB" id="8RUO">
    <property type="method" value="X-ray"/>
    <property type="resolution" value="2.54 A"/>
    <property type="chains" value="A=29-233"/>
</dbReference>
<dbReference type="PDBsum" id="8RUO"/>
<dbReference type="BMRB" id="Q70YI1"/>
<dbReference type="SMR" id="Q70YI1"/>
<dbReference type="STRING" id="91892.BIZ52_04250"/>
<dbReference type="BindingDB" id="Q70YI1"/>
<dbReference type="ChEMBL" id="CHEMBL1667669"/>
<dbReference type="eggNOG" id="COG0545">
    <property type="taxonomic scope" value="Bacteria"/>
</dbReference>
<dbReference type="OMA" id="DQFIAAN"/>
<dbReference type="GO" id="GO:0009279">
    <property type="term" value="C:cell outer membrane"/>
    <property type="evidence" value="ECO:0007669"/>
    <property type="project" value="UniProtKB-SubCell"/>
</dbReference>
<dbReference type="GO" id="GO:0003755">
    <property type="term" value="F:peptidyl-prolyl cis-trans isomerase activity"/>
    <property type="evidence" value="ECO:0007669"/>
    <property type="project" value="UniProtKB-KW"/>
</dbReference>
<dbReference type="GO" id="GO:0006457">
    <property type="term" value="P:protein folding"/>
    <property type="evidence" value="ECO:0007669"/>
    <property type="project" value="InterPro"/>
</dbReference>
<dbReference type="Gene3D" id="3.10.50.40">
    <property type="match status" value="1"/>
</dbReference>
<dbReference type="Gene3D" id="1.10.287.460">
    <property type="entry name" value="Peptidyl-prolyl cis-trans isomerase, FKBP-type, N-terminal domain"/>
    <property type="match status" value="1"/>
</dbReference>
<dbReference type="InterPro" id="IPR008104">
    <property type="entry name" value="INFPOTNTIATR"/>
</dbReference>
<dbReference type="InterPro" id="IPR046357">
    <property type="entry name" value="PPIase_dom_sf"/>
</dbReference>
<dbReference type="InterPro" id="IPR001179">
    <property type="entry name" value="PPIase_FKBP_dom"/>
</dbReference>
<dbReference type="InterPro" id="IPR000774">
    <property type="entry name" value="PPIase_FKBP_N"/>
</dbReference>
<dbReference type="InterPro" id="IPR036944">
    <property type="entry name" value="PPIase_FKBP_N_sf"/>
</dbReference>
<dbReference type="PANTHER" id="PTHR43811">
    <property type="entry name" value="FKBP-TYPE PEPTIDYL-PROLYL CIS-TRANS ISOMERASE FKPA"/>
    <property type="match status" value="1"/>
</dbReference>
<dbReference type="PANTHER" id="PTHR43811:SF57">
    <property type="entry name" value="FKBP-TYPE PEPTIDYL-PROLYL CIS-TRANS ISOMERASE FKPA-RELATED"/>
    <property type="match status" value="1"/>
</dbReference>
<dbReference type="Pfam" id="PF00254">
    <property type="entry name" value="FKBP_C"/>
    <property type="match status" value="1"/>
</dbReference>
<dbReference type="Pfam" id="PF01346">
    <property type="entry name" value="FKBP_N"/>
    <property type="match status" value="1"/>
</dbReference>
<dbReference type="PRINTS" id="PR01730">
    <property type="entry name" value="INFPOTNTIATR"/>
</dbReference>
<dbReference type="SUPFAM" id="SSF54534">
    <property type="entry name" value="FKBP-like"/>
    <property type="match status" value="1"/>
</dbReference>
<dbReference type="PROSITE" id="PS50059">
    <property type="entry name" value="FKBP_PPIASE"/>
    <property type="match status" value="1"/>
</dbReference>
<keyword id="KW-0002">3D-structure</keyword>
<keyword id="KW-0998">Cell outer membrane</keyword>
<keyword id="KW-0903">Direct protein sequencing</keyword>
<keyword id="KW-0413">Isomerase</keyword>
<keyword id="KW-0472">Membrane</keyword>
<keyword id="KW-0697">Rotamase</keyword>
<keyword id="KW-0732">Signal</keyword>
<keyword id="KW-0843">Virulence</keyword>
<gene>
    <name type="primary">mip</name>
</gene>
<accession>Q70YI1</accession>
<accession>P20380</accession>
<accession>P69059</accession>
<accession>Q549M0</accession>